<name>MAD56_ORYSJ</name>
<dbReference type="EMBL" id="AY345224">
    <property type="protein sequence ID" value="AAQ23145.1"/>
    <property type="molecule type" value="mRNA"/>
</dbReference>
<dbReference type="EMBL" id="AY551919">
    <property type="protein sequence ID" value="AAS59825.1"/>
    <property type="molecule type" value="mRNA"/>
</dbReference>
<dbReference type="EMBL" id="AC092697">
    <property type="protein sequence ID" value="AAL58115.1"/>
    <property type="molecule type" value="Genomic_DNA"/>
</dbReference>
<dbReference type="EMBL" id="DP000086">
    <property type="protein sequence ID" value="AAP54810.1"/>
    <property type="molecule type" value="Genomic_DNA"/>
</dbReference>
<dbReference type="EMBL" id="DP000086">
    <property type="protein sequence ID" value="ABG66221.1"/>
    <property type="status" value="ALT_SEQ"/>
    <property type="molecule type" value="Genomic_DNA"/>
</dbReference>
<dbReference type="EMBL" id="AP008216">
    <property type="protein sequence ID" value="BAF27082.1"/>
    <property type="status" value="ALT_SEQ"/>
    <property type="molecule type" value="Genomic_DNA"/>
</dbReference>
<dbReference type="EMBL" id="AP014966">
    <property type="protein sequence ID" value="BAT11822.1"/>
    <property type="molecule type" value="Genomic_DNA"/>
</dbReference>
<dbReference type="EMBL" id="CM000147">
    <property type="protein sequence ID" value="EEE51318.1"/>
    <property type="molecule type" value="Genomic_DNA"/>
</dbReference>
<dbReference type="EMBL" id="AK070135">
    <property type="protein sequence ID" value="BAG91788.1"/>
    <property type="molecule type" value="mRNA"/>
</dbReference>
<dbReference type="RefSeq" id="XP_015614799.1">
    <property type="nucleotide sequence ID" value="XM_015759313.1"/>
</dbReference>
<dbReference type="SMR" id="P0C5B2"/>
<dbReference type="BioGRID" id="818274">
    <property type="interactions" value="2"/>
</dbReference>
<dbReference type="FunCoup" id="P0C5B2">
    <property type="interactions" value="57"/>
</dbReference>
<dbReference type="IntAct" id="P0C5B2">
    <property type="interactions" value="3"/>
</dbReference>
<dbReference type="STRING" id="39947.P0C5B2"/>
<dbReference type="PaxDb" id="39947-P0C5B2"/>
<dbReference type="EnsemblPlants" id="Os10t0536100-01">
    <property type="protein sequence ID" value="Os10t0536100-01"/>
    <property type="gene ID" value="Os10g0536100"/>
</dbReference>
<dbReference type="Gramene" id="Os10t0536100-01">
    <property type="protein sequence ID" value="Os10t0536100-01"/>
    <property type="gene ID" value="Os10g0536100"/>
</dbReference>
<dbReference type="KEGG" id="dosa:Os10g0536100"/>
<dbReference type="eggNOG" id="KOG0014">
    <property type="taxonomic scope" value="Eukaryota"/>
</dbReference>
<dbReference type="HOGENOM" id="CLU_053053_0_4_1"/>
<dbReference type="InParanoid" id="P0C5B2"/>
<dbReference type="OMA" id="KAYTKDH"/>
<dbReference type="OrthoDB" id="1898716at2759"/>
<dbReference type="Proteomes" id="UP000000763">
    <property type="component" value="Chromosome 10"/>
</dbReference>
<dbReference type="Proteomes" id="UP000007752">
    <property type="component" value="Chromosome 10"/>
</dbReference>
<dbReference type="Proteomes" id="UP000059680">
    <property type="component" value="Chromosome 10"/>
</dbReference>
<dbReference type="GO" id="GO:0005634">
    <property type="term" value="C:nucleus"/>
    <property type="evidence" value="ECO:0007669"/>
    <property type="project" value="UniProtKB-SubCell"/>
</dbReference>
<dbReference type="GO" id="GO:0000981">
    <property type="term" value="F:DNA-binding transcription factor activity, RNA polymerase II-specific"/>
    <property type="evidence" value="ECO:0000318"/>
    <property type="project" value="GO_Central"/>
</dbReference>
<dbReference type="GO" id="GO:0046983">
    <property type="term" value="F:protein dimerization activity"/>
    <property type="evidence" value="ECO:0007669"/>
    <property type="project" value="InterPro"/>
</dbReference>
<dbReference type="GO" id="GO:0000978">
    <property type="term" value="F:RNA polymerase II cis-regulatory region sequence-specific DNA binding"/>
    <property type="evidence" value="ECO:0000318"/>
    <property type="project" value="GO_Central"/>
</dbReference>
<dbReference type="GO" id="GO:0045944">
    <property type="term" value="P:positive regulation of transcription by RNA polymerase II"/>
    <property type="evidence" value="ECO:0007669"/>
    <property type="project" value="InterPro"/>
</dbReference>
<dbReference type="GO" id="GO:0006357">
    <property type="term" value="P:regulation of transcription by RNA polymerase II"/>
    <property type="evidence" value="ECO:0000318"/>
    <property type="project" value="GO_Central"/>
</dbReference>
<dbReference type="CDD" id="cd00265">
    <property type="entry name" value="MADS_MEF2_like"/>
    <property type="match status" value="1"/>
</dbReference>
<dbReference type="FunFam" id="3.40.1810.10:FF:000012">
    <property type="entry name" value="MADS-box protein SOC1"/>
    <property type="match status" value="1"/>
</dbReference>
<dbReference type="Gene3D" id="3.40.1810.10">
    <property type="entry name" value="Transcription factor, MADS-box"/>
    <property type="match status" value="1"/>
</dbReference>
<dbReference type="InterPro" id="IPR050142">
    <property type="entry name" value="MADS-box/MEF2_TF"/>
</dbReference>
<dbReference type="InterPro" id="IPR033896">
    <property type="entry name" value="MEF2-like_N"/>
</dbReference>
<dbReference type="InterPro" id="IPR002487">
    <property type="entry name" value="TF_Kbox"/>
</dbReference>
<dbReference type="InterPro" id="IPR002100">
    <property type="entry name" value="TF_MADSbox"/>
</dbReference>
<dbReference type="InterPro" id="IPR036879">
    <property type="entry name" value="TF_MADSbox_sf"/>
</dbReference>
<dbReference type="PANTHER" id="PTHR48019">
    <property type="entry name" value="SERUM RESPONSE FACTOR HOMOLOG"/>
    <property type="match status" value="1"/>
</dbReference>
<dbReference type="Pfam" id="PF01486">
    <property type="entry name" value="K-box"/>
    <property type="match status" value="1"/>
</dbReference>
<dbReference type="Pfam" id="PF00319">
    <property type="entry name" value="SRF-TF"/>
    <property type="match status" value="1"/>
</dbReference>
<dbReference type="PRINTS" id="PR00404">
    <property type="entry name" value="MADSDOMAIN"/>
</dbReference>
<dbReference type="SMART" id="SM00432">
    <property type="entry name" value="MADS"/>
    <property type="match status" value="1"/>
</dbReference>
<dbReference type="SUPFAM" id="SSF55455">
    <property type="entry name" value="SRF-like"/>
    <property type="match status" value="1"/>
</dbReference>
<dbReference type="PROSITE" id="PS51297">
    <property type="entry name" value="K_BOX"/>
    <property type="match status" value="1"/>
</dbReference>
<dbReference type="PROSITE" id="PS00350">
    <property type="entry name" value="MADS_BOX_1"/>
    <property type="match status" value="1"/>
</dbReference>
<dbReference type="PROSITE" id="PS50066">
    <property type="entry name" value="MADS_BOX_2"/>
    <property type="match status" value="1"/>
</dbReference>
<protein>
    <recommendedName>
        <fullName>MADS-box transcription factor 56</fullName>
    </recommendedName>
    <alternativeName>
        <fullName>FDRMADS8</fullName>
    </alternativeName>
    <alternativeName>
        <fullName>OsMADS56</fullName>
    </alternativeName>
    <alternativeName>
        <fullName>RMADS214</fullName>
    </alternativeName>
</protein>
<proteinExistence type="evidence at transcript level"/>
<gene>
    <name type="primary">MADS56</name>
    <name type="ordered locus">Os10g0536100</name>
    <name type="ordered locus">LOC_Os10g39130</name>
    <name evidence="4" type="ORF">OsJ_32282</name>
    <name type="ORF">OSJNBb0060I05.3</name>
</gene>
<sequence length="233" mass="26305">MVRGRTELKRIENPTSRQVTFSKRRNGLLKKAFELSVLCDAEVALIVFSPRGRLYEFASAPSLQKTIDRYKAYTKDHVNNKTIQQDIQQVKDDTLGLAKKLEALDESRRKILGENLEGFSIEELRGLEMKLEKSLHKIRLKKTELLEQQIAKLKEKERTLLKDNENLRGKHRNLEAAALVANHMTTTTAPAAWPRDVPMTSSTAGAADAMDVETDLYIGLPGTERSSNRSETG</sequence>
<comment type="function">
    <text>Probable transcription factor.</text>
</comment>
<comment type="subcellular location">
    <subcellularLocation>
        <location evidence="3">Nucleus</location>
    </subcellularLocation>
</comment>
<comment type="sequence caution" evidence="3">
    <conflict type="erroneous gene model prediction">
        <sequence resource="EMBL-CDS" id="ABG66221"/>
    </conflict>
</comment>
<comment type="sequence caution" evidence="3">
    <conflict type="erroneous gene model prediction">
        <sequence resource="EMBL-CDS" id="BAF27082"/>
    </conflict>
</comment>
<reference key="1">
    <citation type="journal article" date="2003" name="Plant Cell Physiol.">
        <title>Systematic reverse genetic screening of T-DNA tagged genes in rice for functional genomic analyses: MADS-box genes as a test case.</title>
        <authorList>
            <person name="Lee S."/>
            <person name="Kim J."/>
            <person name="Son J.-S."/>
            <person name="Nam J."/>
            <person name="Jeong D.-H."/>
            <person name="Lee K."/>
            <person name="Jang S."/>
            <person name="Yoo J."/>
            <person name="Lee J."/>
            <person name="Lee D.-Y."/>
            <person name="Kang H.-G."/>
            <person name="An G."/>
        </authorList>
    </citation>
    <scope>NUCLEOTIDE SEQUENCE [MRNA]</scope>
    <source>
        <strain>cv. Dongjin</strain>
    </source>
</reference>
<reference key="2">
    <citation type="submission" date="2004-02" db="EMBL/GenBank/DDBJ databases">
        <title>Oryza sativa (japonica cultivar-group) MADS-box protein RMADS214.</title>
        <authorList>
            <person name="Yao Q."/>
            <person name="Peng R."/>
            <person name="Xiong A."/>
        </authorList>
    </citation>
    <scope>NUCLEOTIDE SEQUENCE [MRNA]</scope>
</reference>
<reference key="3">
    <citation type="journal article" date="2003" name="Science">
        <title>In-depth view of structure, activity, and evolution of rice chromosome 10.</title>
        <authorList>
            <person name="Yu Y."/>
            <person name="Rambo T."/>
            <person name="Currie J."/>
            <person name="Saski C."/>
            <person name="Kim H.-R."/>
            <person name="Collura K."/>
            <person name="Thompson S."/>
            <person name="Simmons J."/>
            <person name="Yang T.-J."/>
            <person name="Nah G."/>
            <person name="Patel A.J."/>
            <person name="Thurmond S."/>
            <person name="Henry D."/>
            <person name="Oates R."/>
            <person name="Palmer M."/>
            <person name="Pries G."/>
            <person name="Gibson J."/>
            <person name="Anderson H."/>
            <person name="Paradkar M."/>
            <person name="Crane L."/>
            <person name="Dale J."/>
            <person name="Carver M.B."/>
            <person name="Wood T."/>
            <person name="Frisch D."/>
            <person name="Engler F."/>
            <person name="Soderlund C."/>
            <person name="Palmer L.E."/>
            <person name="Teytelman L."/>
            <person name="Nascimento L."/>
            <person name="De la Bastide M."/>
            <person name="Spiegel L."/>
            <person name="Ware D."/>
            <person name="O'Shaughnessy A."/>
            <person name="Dike S."/>
            <person name="Dedhia N."/>
            <person name="Preston R."/>
            <person name="Huang E."/>
            <person name="Ferraro K."/>
            <person name="Kuit K."/>
            <person name="Miller B."/>
            <person name="Zutavern T."/>
            <person name="Katzenberger F."/>
            <person name="Muller S."/>
            <person name="Balija V."/>
            <person name="Martienssen R.A."/>
            <person name="Stein L."/>
            <person name="Minx P."/>
            <person name="Johnson D."/>
            <person name="Cordum H."/>
            <person name="Mardis E."/>
            <person name="Cheng Z."/>
            <person name="Jiang J."/>
            <person name="Wilson R."/>
            <person name="McCombie W.R."/>
            <person name="Wing R.A."/>
            <person name="Yuan Q."/>
            <person name="Ouyang S."/>
            <person name="Liu J."/>
            <person name="Jones K.M."/>
            <person name="Gansberger K."/>
            <person name="Moffat K."/>
            <person name="Hill J."/>
            <person name="Tsitrin T."/>
            <person name="Overton L."/>
            <person name="Bera J."/>
            <person name="Kim M."/>
            <person name="Jin S."/>
            <person name="Tallon L."/>
            <person name="Ciecko A."/>
            <person name="Pai G."/>
            <person name="Van Aken S."/>
            <person name="Utterback T."/>
            <person name="Reidmuller S."/>
            <person name="Bormann J."/>
            <person name="Feldblyum T."/>
            <person name="Hsiao J."/>
            <person name="Zismann V."/>
            <person name="Blunt S."/>
            <person name="de Vazeille A.R."/>
            <person name="Shaffer T."/>
            <person name="Koo H."/>
            <person name="Suh B."/>
            <person name="Yang Q."/>
            <person name="Haas B."/>
            <person name="Peterson J."/>
            <person name="Pertea M."/>
            <person name="Volfovsky N."/>
            <person name="Wortman J."/>
            <person name="White O."/>
            <person name="Salzberg S.L."/>
            <person name="Fraser C.M."/>
            <person name="Buell C.R."/>
            <person name="Messing J."/>
            <person name="Song R."/>
            <person name="Fuks G."/>
            <person name="Llaca V."/>
            <person name="Kovchak S."/>
            <person name="Young S."/>
            <person name="Bowers J.E."/>
            <person name="Paterson A.H."/>
            <person name="Johns M.A."/>
            <person name="Mao L."/>
            <person name="Pan H."/>
            <person name="Dean R.A."/>
        </authorList>
    </citation>
    <scope>NUCLEOTIDE SEQUENCE [LARGE SCALE GENOMIC DNA]</scope>
    <source>
        <strain>cv. Nipponbare</strain>
    </source>
</reference>
<reference key="4">
    <citation type="journal article" date="2005" name="Nature">
        <title>The map-based sequence of the rice genome.</title>
        <authorList>
            <consortium name="International rice genome sequencing project (IRGSP)"/>
        </authorList>
    </citation>
    <scope>NUCLEOTIDE SEQUENCE [LARGE SCALE GENOMIC DNA]</scope>
    <source>
        <strain>cv. Nipponbare</strain>
    </source>
</reference>
<reference key="5">
    <citation type="journal article" date="2008" name="Nucleic Acids Res.">
        <title>The rice annotation project database (RAP-DB): 2008 update.</title>
        <authorList>
            <consortium name="The rice annotation project (RAP)"/>
        </authorList>
    </citation>
    <scope>GENOME REANNOTATION</scope>
    <source>
        <strain>cv. Nipponbare</strain>
    </source>
</reference>
<reference key="6">
    <citation type="journal article" date="2013" name="Rice">
        <title>Improvement of the Oryza sativa Nipponbare reference genome using next generation sequence and optical map data.</title>
        <authorList>
            <person name="Kawahara Y."/>
            <person name="de la Bastide M."/>
            <person name="Hamilton J.P."/>
            <person name="Kanamori H."/>
            <person name="McCombie W.R."/>
            <person name="Ouyang S."/>
            <person name="Schwartz D.C."/>
            <person name="Tanaka T."/>
            <person name="Wu J."/>
            <person name="Zhou S."/>
            <person name="Childs K.L."/>
            <person name="Davidson R.M."/>
            <person name="Lin H."/>
            <person name="Quesada-Ocampo L."/>
            <person name="Vaillancourt B."/>
            <person name="Sakai H."/>
            <person name="Lee S.S."/>
            <person name="Kim J."/>
            <person name="Numa H."/>
            <person name="Itoh T."/>
            <person name="Buell C.R."/>
            <person name="Matsumoto T."/>
        </authorList>
    </citation>
    <scope>GENOME REANNOTATION</scope>
    <source>
        <strain>cv. Nipponbare</strain>
    </source>
</reference>
<reference key="7">
    <citation type="journal article" date="2005" name="PLoS Biol.">
        <title>The genomes of Oryza sativa: a history of duplications.</title>
        <authorList>
            <person name="Yu J."/>
            <person name="Wang J."/>
            <person name="Lin W."/>
            <person name="Li S."/>
            <person name="Li H."/>
            <person name="Zhou J."/>
            <person name="Ni P."/>
            <person name="Dong W."/>
            <person name="Hu S."/>
            <person name="Zeng C."/>
            <person name="Zhang J."/>
            <person name="Zhang Y."/>
            <person name="Li R."/>
            <person name="Xu Z."/>
            <person name="Li S."/>
            <person name="Li X."/>
            <person name="Zheng H."/>
            <person name="Cong L."/>
            <person name="Lin L."/>
            <person name="Yin J."/>
            <person name="Geng J."/>
            <person name="Li G."/>
            <person name="Shi J."/>
            <person name="Liu J."/>
            <person name="Lv H."/>
            <person name="Li J."/>
            <person name="Wang J."/>
            <person name="Deng Y."/>
            <person name="Ran L."/>
            <person name="Shi X."/>
            <person name="Wang X."/>
            <person name="Wu Q."/>
            <person name="Li C."/>
            <person name="Ren X."/>
            <person name="Wang J."/>
            <person name="Wang X."/>
            <person name="Li D."/>
            <person name="Liu D."/>
            <person name="Zhang X."/>
            <person name="Ji Z."/>
            <person name="Zhao W."/>
            <person name="Sun Y."/>
            <person name="Zhang Z."/>
            <person name="Bao J."/>
            <person name="Han Y."/>
            <person name="Dong L."/>
            <person name="Ji J."/>
            <person name="Chen P."/>
            <person name="Wu S."/>
            <person name="Liu J."/>
            <person name="Xiao Y."/>
            <person name="Bu D."/>
            <person name="Tan J."/>
            <person name="Yang L."/>
            <person name="Ye C."/>
            <person name="Zhang J."/>
            <person name="Xu J."/>
            <person name="Zhou Y."/>
            <person name="Yu Y."/>
            <person name="Zhang B."/>
            <person name="Zhuang S."/>
            <person name="Wei H."/>
            <person name="Liu B."/>
            <person name="Lei M."/>
            <person name="Yu H."/>
            <person name="Li Y."/>
            <person name="Xu H."/>
            <person name="Wei S."/>
            <person name="He X."/>
            <person name="Fang L."/>
            <person name="Zhang Z."/>
            <person name="Zhang Y."/>
            <person name="Huang X."/>
            <person name="Su Z."/>
            <person name="Tong W."/>
            <person name="Li J."/>
            <person name="Tong Z."/>
            <person name="Li S."/>
            <person name="Ye J."/>
            <person name="Wang L."/>
            <person name="Fang L."/>
            <person name="Lei T."/>
            <person name="Chen C.-S."/>
            <person name="Chen H.-C."/>
            <person name="Xu Z."/>
            <person name="Li H."/>
            <person name="Huang H."/>
            <person name="Zhang F."/>
            <person name="Xu H."/>
            <person name="Li N."/>
            <person name="Zhao C."/>
            <person name="Li S."/>
            <person name="Dong L."/>
            <person name="Huang Y."/>
            <person name="Li L."/>
            <person name="Xi Y."/>
            <person name="Qi Q."/>
            <person name="Li W."/>
            <person name="Zhang B."/>
            <person name="Hu W."/>
            <person name="Zhang Y."/>
            <person name="Tian X."/>
            <person name="Jiao Y."/>
            <person name="Liang X."/>
            <person name="Jin J."/>
            <person name="Gao L."/>
            <person name="Zheng W."/>
            <person name="Hao B."/>
            <person name="Liu S.-M."/>
            <person name="Wang W."/>
            <person name="Yuan L."/>
            <person name="Cao M."/>
            <person name="McDermott J."/>
            <person name="Samudrala R."/>
            <person name="Wang J."/>
            <person name="Wong G.K.-S."/>
            <person name="Yang H."/>
        </authorList>
    </citation>
    <scope>NUCLEOTIDE SEQUENCE [LARGE SCALE GENOMIC DNA]</scope>
    <source>
        <strain>cv. Nipponbare</strain>
    </source>
</reference>
<reference key="8">
    <citation type="journal article" date="2003" name="Science">
        <title>Collection, mapping, and annotation of over 28,000 cDNA clones from japonica rice.</title>
        <authorList>
            <consortium name="The rice full-length cDNA consortium"/>
        </authorList>
    </citation>
    <scope>NUCLEOTIDE SEQUENCE [LARGE SCALE MRNA]</scope>
    <source>
        <strain>cv. Nipponbare</strain>
    </source>
</reference>
<accession>P0C5B2</accession>
<accession>B7EHE1</accession>
<accession>Q0IW33</accession>
<accession>Q109B7</accession>
<accession>Q6VAM0</accession>
<accession>Q7XCN2</accession>
<accession>Q8W2X6</accession>
<accession>Q9XH55</accession>
<evidence type="ECO:0000255" key="1">
    <source>
        <dbReference type="PROSITE-ProRule" id="PRU00251"/>
    </source>
</evidence>
<evidence type="ECO:0000255" key="2">
    <source>
        <dbReference type="PROSITE-ProRule" id="PRU00629"/>
    </source>
</evidence>
<evidence type="ECO:0000305" key="3"/>
<evidence type="ECO:0000312" key="4">
    <source>
        <dbReference type="EMBL" id="EEE51318.1"/>
    </source>
</evidence>
<keyword id="KW-0238">DNA-binding</keyword>
<keyword id="KW-0539">Nucleus</keyword>
<keyword id="KW-1185">Reference proteome</keyword>
<keyword id="KW-0804">Transcription</keyword>
<keyword id="KW-0805">Transcription regulation</keyword>
<organism>
    <name type="scientific">Oryza sativa subsp. japonica</name>
    <name type="common">Rice</name>
    <dbReference type="NCBI Taxonomy" id="39947"/>
    <lineage>
        <taxon>Eukaryota</taxon>
        <taxon>Viridiplantae</taxon>
        <taxon>Streptophyta</taxon>
        <taxon>Embryophyta</taxon>
        <taxon>Tracheophyta</taxon>
        <taxon>Spermatophyta</taxon>
        <taxon>Magnoliopsida</taxon>
        <taxon>Liliopsida</taxon>
        <taxon>Poales</taxon>
        <taxon>Poaceae</taxon>
        <taxon>BOP clade</taxon>
        <taxon>Oryzoideae</taxon>
        <taxon>Oryzeae</taxon>
        <taxon>Oryzinae</taxon>
        <taxon>Oryza</taxon>
        <taxon>Oryza sativa</taxon>
    </lineage>
</organism>
<feature type="chain" id="PRO_0000229918" description="MADS-box transcription factor 56">
    <location>
        <begin position="1"/>
        <end position="233"/>
    </location>
</feature>
<feature type="domain" description="MADS-box" evidence="1">
    <location>
        <begin position="1"/>
        <end position="61"/>
    </location>
</feature>
<feature type="domain" description="K-box" evidence="2">
    <location>
        <begin position="87"/>
        <end position="177"/>
    </location>
</feature>
<feature type="sequence conflict" description="In Ref. 1; AAQ23145." evidence="3" ref="1">
    <original>F</original>
    <variation>C</variation>
    <location>
        <position position="119"/>
    </location>
</feature>
<feature type="sequence conflict" description="In Ref. 1; AAQ23145." evidence="3" ref="1">
    <original>K</original>
    <variation>N</variation>
    <location>
        <position position="137"/>
    </location>
</feature>
<feature type="sequence conflict" description="In Ref. 1; AAQ23145." evidence="3" ref="1">
    <location>
        <begin position="207"/>
        <end position="209"/>
    </location>
</feature>